<evidence type="ECO:0000255" key="1">
    <source>
        <dbReference type="HAMAP-Rule" id="MF_00759"/>
    </source>
</evidence>
<organism>
    <name type="scientific">Histophilus somni (strain 2336)</name>
    <name type="common">Haemophilus somnus</name>
    <dbReference type="NCBI Taxonomy" id="228400"/>
    <lineage>
        <taxon>Bacteria</taxon>
        <taxon>Pseudomonadati</taxon>
        <taxon>Pseudomonadota</taxon>
        <taxon>Gammaproteobacteria</taxon>
        <taxon>Pasteurellales</taxon>
        <taxon>Pasteurellaceae</taxon>
        <taxon>Histophilus</taxon>
    </lineage>
</organism>
<keyword id="KW-0963">Cytoplasm</keyword>
<keyword id="KW-0227">DNA damage</keyword>
<keyword id="KW-0234">DNA repair</keyword>
<keyword id="KW-0255">Endonuclease</keyword>
<keyword id="KW-0378">Hydrolase</keyword>
<keyword id="KW-0540">Nuclease</keyword>
<sequence length="224" mass="24996">MTALTPPQHEAELLQRAKSIAGLTFAELAEELNLVVPPDLKRDKGWVGMLIETALGATAGSKAEQDFSHLGIELKTIPVNQQGYPLETTFVSLAPLAQNSGVTWHSSHVRYKLSKVLWIPIEGERQIPLAERHVGVPILWQPSSSQEQRLRQDWEELMDYIVLGKLTEITARIGEVLQLRPKGANSRALTKGIGKNGEIIDTLPLGFYLRKEFTAEILHDFLMD</sequence>
<accession>B0URN6</accession>
<feature type="chain" id="PRO_1000148401" description="DNA mismatch repair protein MutH">
    <location>
        <begin position="1"/>
        <end position="224"/>
    </location>
</feature>
<comment type="function">
    <text evidence="1">Sequence-specific endonuclease that cleaves unmethylated GATC sequences. It is involved in DNA mismatch repair.</text>
</comment>
<comment type="subcellular location">
    <subcellularLocation>
        <location evidence="1">Cytoplasm</location>
    </subcellularLocation>
</comment>
<comment type="similarity">
    <text evidence="1">Belongs to the MutH family.</text>
</comment>
<name>MUTH_HISS2</name>
<gene>
    <name evidence="1" type="primary">mutH</name>
    <name type="ordered locus">HSM_0474</name>
</gene>
<dbReference type="EMBL" id="CP000947">
    <property type="protein sequence ID" value="ACA32120.1"/>
    <property type="molecule type" value="Genomic_DNA"/>
</dbReference>
<dbReference type="RefSeq" id="WP_012341312.1">
    <property type="nucleotide sequence ID" value="NC_010519.1"/>
</dbReference>
<dbReference type="SMR" id="B0URN6"/>
<dbReference type="STRING" id="228400.HSM_0474"/>
<dbReference type="GeneID" id="31486757"/>
<dbReference type="KEGG" id="hsm:HSM_0474"/>
<dbReference type="HOGENOM" id="CLU_086669_0_0_6"/>
<dbReference type="GO" id="GO:0005737">
    <property type="term" value="C:cytoplasm"/>
    <property type="evidence" value="ECO:0007669"/>
    <property type="project" value="UniProtKB-SubCell"/>
</dbReference>
<dbReference type="GO" id="GO:0003677">
    <property type="term" value="F:DNA binding"/>
    <property type="evidence" value="ECO:0007669"/>
    <property type="project" value="InterPro"/>
</dbReference>
<dbReference type="GO" id="GO:0004519">
    <property type="term" value="F:endonuclease activity"/>
    <property type="evidence" value="ECO:0007669"/>
    <property type="project" value="UniProtKB-UniRule"/>
</dbReference>
<dbReference type="GO" id="GO:0006304">
    <property type="term" value="P:DNA modification"/>
    <property type="evidence" value="ECO:0007669"/>
    <property type="project" value="InterPro"/>
</dbReference>
<dbReference type="GO" id="GO:0006298">
    <property type="term" value="P:mismatch repair"/>
    <property type="evidence" value="ECO:0007669"/>
    <property type="project" value="UniProtKB-UniRule"/>
</dbReference>
<dbReference type="CDD" id="cd00583">
    <property type="entry name" value="MutH-like"/>
    <property type="match status" value="1"/>
</dbReference>
<dbReference type="Gene3D" id="3.40.600.10">
    <property type="entry name" value="DNA mismatch repair MutH/Restriction endonuclease, type II"/>
    <property type="match status" value="1"/>
</dbReference>
<dbReference type="HAMAP" id="MF_00759">
    <property type="entry name" value="MutH"/>
    <property type="match status" value="1"/>
</dbReference>
<dbReference type="InterPro" id="IPR004230">
    <property type="entry name" value="DNA_mismatch_repair_MutH"/>
</dbReference>
<dbReference type="InterPro" id="IPR011337">
    <property type="entry name" value="DNA_rep_MutH/RE_typeII_Sau3AI"/>
</dbReference>
<dbReference type="InterPro" id="IPR037057">
    <property type="entry name" value="DNA_rep_MutH/T2_RE_sf"/>
</dbReference>
<dbReference type="InterPro" id="IPR011335">
    <property type="entry name" value="Restrct_endonuc-II-like"/>
</dbReference>
<dbReference type="NCBIfam" id="TIGR02248">
    <property type="entry name" value="mutH_TIGR"/>
    <property type="match status" value="1"/>
</dbReference>
<dbReference type="NCBIfam" id="NF003458">
    <property type="entry name" value="PRK05070.1"/>
    <property type="match status" value="1"/>
</dbReference>
<dbReference type="Pfam" id="PF02976">
    <property type="entry name" value="MutH"/>
    <property type="match status" value="1"/>
</dbReference>
<dbReference type="SMART" id="SM00927">
    <property type="entry name" value="MutH"/>
    <property type="match status" value="1"/>
</dbReference>
<dbReference type="SUPFAM" id="SSF52980">
    <property type="entry name" value="Restriction endonuclease-like"/>
    <property type="match status" value="1"/>
</dbReference>
<reference key="1">
    <citation type="submission" date="2008-02" db="EMBL/GenBank/DDBJ databases">
        <title>Complete sequence of Haemophilus somnus 2336.</title>
        <authorList>
            <consortium name="US DOE Joint Genome Institute"/>
            <person name="Siddaramappa S."/>
            <person name="Duncan A.J."/>
            <person name="Challacombe J.F."/>
            <person name="Rainey D."/>
            <person name="Gillaspy A.F."/>
            <person name="Carson M."/>
            <person name="Gipson J."/>
            <person name="Gipson M."/>
            <person name="Bruce D."/>
            <person name="Detter J.C."/>
            <person name="Han C.S."/>
            <person name="Land M."/>
            <person name="Tapia R."/>
            <person name="Thompson L.S."/>
            <person name="Orvis J."/>
            <person name="Zaitshik J."/>
            <person name="Barnes G."/>
            <person name="Brettin T.S."/>
            <person name="Dyer D.W."/>
            <person name="Inzana T.J."/>
        </authorList>
    </citation>
    <scope>NUCLEOTIDE SEQUENCE [LARGE SCALE GENOMIC DNA]</scope>
    <source>
        <strain>2336</strain>
    </source>
</reference>
<proteinExistence type="inferred from homology"/>
<protein>
    <recommendedName>
        <fullName evidence="1">DNA mismatch repair protein MutH</fullName>
    </recommendedName>
    <alternativeName>
        <fullName evidence="1">Methyl-directed mismatch repair protein</fullName>
    </alternativeName>
</protein>